<comment type="function">
    <text evidence="1">Catalyzes the ATP-dependent conversion of 7-carboxy-7-deazaguanine (CDG) to 7-cyano-7-deazaguanine (preQ(0)).</text>
</comment>
<comment type="catalytic activity">
    <reaction evidence="1">
        <text>7-carboxy-7-deazaguanine + NH4(+) + ATP = 7-cyano-7-deazaguanine + ADP + phosphate + H2O + H(+)</text>
        <dbReference type="Rhea" id="RHEA:27982"/>
        <dbReference type="ChEBI" id="CHEBI:15377"/>
        <dbReference type="ChEBI" id="CHEBI:15378"/>
        <dbReference type="ChEBI" id="CHEBI:28938"/>
        <dbReference type="ChEBI" id="CHEBI:30616"/>
        <dbReference type="ChEBI" id="CHEBI:43474"/>
        <dbReference type="ChEBI" id="CHEBI:45075"/>
        <dbReference type="ChEBI" id="CHEBI:61036"/>
        <dbReference type="ChEBI" id="CHEBI:456216"/>
        <dbReference type="EC" id="6.3.4.20"/>
    </reaction>
</comment>
<comment type="cofactor">
    <cofactor evidence="1">
        <name>Zn(2+)</name>
        <dbReference type="ChEBI" id="CHEBI:29105"/>
    </cofactor>
    <text evidence="1">Binds 1 zinc ion per subunit.</text>
</comment>
<comment type="pathway">
    <text evidence="1">Purine metabolism; 7-cyano-7-deazaguanine biosynthesis.</text>
</comment>
<comment type="similarity">
    <text evidence="1">Belongs to the QueC family.</text>
</comment>
<dbReference type="EC" id="6.3.4.20" evidence="1"/>
<dbReference type="EMBL" id="AE007870">
    <property type="protein sequence ID" value="AAK90044.1"/>
    <property type="molecule type" value="Genomic_DNA"/>
</dbReference>
<dbReference type="PIR" id="AI2967">
    <property type="entry name" value="AI2967"/>
</dbReference>
<dbReference type="PIR" id="B98315">
    <property type="entry name" value="B98315"/>
</dbReference>
<dbReference type="RefSeq" id="NP_357259.1">
    <property type="nucleotide sequence ID" value="NC_003063.2"/>
</dbReference>
<dbReference type="RefSeq" id="WP_010972958.1">
    <property type="nucleotide sequence ID" value="NC_003063.2"/>
</dbReference>
<dbReference type="SMR" id="Q8UAM7"/>
<dbReference type="STRING" id="176299.Atu3346"/>
<dbReference type="EnsemblBacteria" id="AAK90044">
    <property type="protein sequence ID" value="AAK90044"/>
    <property type="gene ID" value="Atu3346"/>
</dbReference>
<dbReference type="GeneID" id="1135220"/>
<dbReference type="KEGG" id="atu:Atu3346"/>
<dbReference type="PATRIC" id="fig|176299.10.peg.3186"/>
<dbReference type="eggNOG" id="COG0603">
    <property type="taxonomic scope" value="Bacteria"/>
</dbReference>
<dbReference type="HOGENOM" id="CLU_081854_1_0_5"/>
<dbReference type="OrthoDB" id="9789567at2"/>
<dbReference type="PhylomeDB" id="Q8UAM7"/>
<dbReference type="BioCyc" id="AGRO:ATU3346-MONOMER"/>
<dbReference type="UniPathway" id="UPA00391"/>
<dbReference type="Proteomes" id="UP000000813">
    <property type="component" value="Chromosome linear"/>
</dbReference>
<dbReference type="GO" id="GO:0005524">
    <property type="term" value="F:ATP binding"/>
    <property type="evidence" value="ECO:0007669"/>
    <property type="project" value="UniProtKB-UniRule"/>
</dbReference>
<dbReference type="GO" id="GO:0016879">
    <property type="term" value="F:ligase activity, forming carbon-nitrogen bonds"/>
    <property type="evidence" value="ECO:0007669"/>
    <property type="project" value="UniProtKB-UniRule"/>
</dbReference>
<dbReference type="GO" id="GO:0008270">
    <property type="term" value="F:zinc ion binding"/>
    <property type="evidence" value="ECO:0007669"/>
    <property type="project" value="UniProtKB-UniRule"/>
</dbReference>
<dbReference type="GO" id="GO:0008616">
    <property type="term" value="P:queuosine biosynthetic process"/>
    <property type="evidence" value="ECO:0007669"/>
    <property type="project" value="UniProtKB-UniRule"/>
</dbReference>
<dbReference type="CDD" id="cd01995">
    <property type="entry name" value="QueC-like"/>
    <property type="match status" value="1"/>
</dbReference>
<dbReference type="Gene3D" id="3.40.50.620">
    <property type="entry name" value="HUPs"/>
    <property type="match status" value="1"/>
</dbReference>
<dbReference type="HAMAP" id="MF_01633">
    <property type="entry name" value="QueC"/>
    <property type="match status" value="1"/>
</dbReference>
<dbReference type="InterPro" id="IPR018317">
    <property type="entry name" value="QueC"/>
</dbReference>
<dbReference type="InterPro" id="IPR014729">
    <property type="entry name" value="Rossmann-like_a/b/a_fold"/>
</dbReference>
<dbReference type="NCBIfam" id="TIGR00364">
    <property type="entry name" value="7-cyano-7-deazaguanine synthase QueC"/>
    <property type="match status" value="1"/>
</dbReference>
<dbReference type="PANTHER" id="PTHR42914">
    <property type="entry name" value="7-CYANO-7-DEAZAGUANINE SYNTHASE"/>
    <property type="match status" value="1"/>
</dbReference>
<dbReference type="PANTHER" id="PTHR42914:SF1">
    <property type="entry name" value="7-CYANO-7-DEAZAGUANINE SYNTHASE"/>
    <property type="match status" value="1"/>
</dbReference>
<dbReference type="Pfam" id="PF06508">
    <property type="entry name" value="QueC"/>
    <property type="match status" value="1"/>
</dbReference>
<dbReference type="PIRSF" id="PIRSF006293">
    <property type="entry name" value="ExsB"/>
    <property type="match status" value="1"/>
</dbReference>
<dbReference type="SUPFAM" id="SSF52402">
    <property type="entry name" value="Adenine nucleotide alpha hydrolases-like"/>
    <property type="match status" value="1"/>
</dbReference>
<protein>
    <recommendedName>
        <fullName evidence="1">7-cyano-7-deazaguanine synthase</fullName>
        <ecNumber evidence="1">6.3.4.20</ecNumber>
    </recommendedName>
    <alternativeName>
        <fullName evidence="1">7-cyano-7-carbaguanine synthase</fullName>
    </alternativeName>
    <alternativeName>
        <fullName evidence="1">PreQ(0) synthase</fullName>
    </alternativeName>
    <alternativeName>
        <fullName evidence="1">Queuosine biosynthesis protein QueC</fullName>
    </alternativeName>
</protein>
<name>QUEC_AGRFC</name>
<gene>
    <name evidence="1" type="primary">queC</name>
    <name type="ordered locus">Atu3346</name>
    <name type="ORF">AGR_L_2950</name>
</gene>
<keyword id="KW-0067">ATP-binding</keyword>
<keyword id="KW-0436">Ligase</keyword>
<keyword id="KW-0479">Metal-binding</keyword>
<keyword id="KW-0547">Nucleotide-binding</keyword>
<keyword id="KW-0671">Queuosine biosynthesis</keyword>
<keyword id="KW-1185">Reference proteome</keyword>
<keyword id="KW-0862">Zinc</keyword>
<feature type="chain" id="PRO_0000246788" description="7-cyano-7-deazaguanine synthase">
    <location>
        <begin position="1"/>
        <end position="236"/>
    </location>
</feature>
<feature type="binding site" evidence="1">
    <location>
        <begin position="7"/>
        <end position="17"/>
    </location>
    <ligand>
        <name>ATP</name>
        <dbReference type="ChEBI" id="CHEBI:30616"/>
    </ligand>
</feature>
<feature type="binding site" evidence="1">
    <location>
        <position position="185"/>
    </location>
    <ligand>
        <name>Zn(2+)</name>
        <dbReference type="ChEBI" id="CHEBI:29105"/>
    </ligand>
</feature>
<feature type="binding site" evidence="1">
    <location>
        <position position="193"/>
    </location>
    <ligand>
        <name>Zn(2+)</name>
        <dbReference type="ChEBI" id="CHEBI:29105"/>
    </ligand>
</feature>
<feature type="binding site" evidence="1">
    <location>
        <position position="196"/>
    </location>
    <ligand>
        <name>Zn(2+)</name>
        <dbReference type="ChEBI" id="CHEBI:29105"/>
    </ligand>
</feature>
<feature type="binding site" evidence="1">
    <location>
        <position position="199"/>
    </location>
    <ligand>
        <name>Zn(2+)</name>
        <dbReference type="ChEBI" id="CHEBI:29105"/>
    </ligand>
</feature>
<sequence length="236" mass="25365">MKTIVICSGGLDSVSLAHKIAAEHELLALVSFDYGQRHKKELDFAADCAKRLGVPHHLIDIGTIGAHLTGSALTDDIDVPDGHYAEETMRSTVVPNRNAIMLTIAFGLAAAQQADAVAIAVHGGDHFIYPDCRPGFIGSFNAMQAHALEGYADVTLFAPYVTVSKAAIVTDAVKYGTPFGETWSCYKGGLRHCGRCGTCVERREAFHLAGVTDPTEYEDPDFWVAATQAYAAQEVH</sequence>
<proteinExistence type="inferred from homology"/>
<evidence type="ECO:0000255" key="1">
    <source>
        <dbReference type="HAMAP-Rule" id="MF_01633"/>
    </source>
</evidence>
<organism>
    <name type="scientific">Agrobacterium fabrum (strain C58 / ATCC 33970)</name>
    <name type="common">Agrobacterium tumefaciens (strain C58)</name>
    <dbReference type="NCBI Taxonomy" id="176299"/>
    <lineage>
        <taxon>Bacteria</taxon>
        <taxon>Pseudomonadati</taxon>
        <taxon>Pseudomonadota</taxon>
        <taxon>Alphaproteobacteria</taxon>
        <taxon>Hyphomicrobiales</taxon>
        <taxon>Rhizobiaceae</taxon>
        <taxon>Rhizobium/Agrobacterium group</taxon>
        <taxon>Agrobacterium</taxon>
        <taxon>Agrobacterium tumefaciens complex</taxon>
    </lineage>
</organism>
<reference key="1">
    <citation type="journal article" date="2001" name="Science">
        <title>The genome of the natural genetic engineer Agrobacterium tumefaciens C58.</title>
        <authorList>
            <person name="Wood D.W."/>
            <person name="Setubal J.C."/>
            <person name="Kaul R."/>
            <person name="Monks D.E."/>
            <person name="Kitajima J.P."/>
            <person name="Okura V.K."/>
            <person name="Zhou Y."/>
            <person name="Chen L."/>
            <person name="Wood G.E."/>
            <person name="Almeida N.F. Jr."/>
            <person name="Woo L."/>
            <person name="Chen Y."/>
            <person name="Paulsen I.T."/>
            <person name="Eisen J.A."/>
            <person name="Karp P.D."/>
            <person name="Bovee D. Sr."/>
            <person name="Chapman P."/>
            <person name="Clendenning J."/>
            <person name="Deatherage G."/>
            <person name="Gillet W."/>
            <person name="Grant C."/>
            <person name="Kutyavin T."/>
            <person name="Levy R."/>
            <person name="Li M.-J."/>
            <person name="McClelland E."/>
            <person name="Palmieri A."/>
            <person name="Raymond C."/>
            <person name="Rouse G."/>
            <person name="Saenphimmachak C."/>
            <person name="Wu Z."/>
            <person name="Romero P."/>
            <person name="Gordon D."/>
            <person name="Zhang S."/>
            <person name="Yoo H."/>
            <person name="Tao Y."/>
            <person name="Biddle P."/>
            <person name="Jung M."/>
            <person name="Krespan W."/>
            <person name="Perry M."/>
            <person name="Gordon-Kamm B."/>
            <person name="Liao L."/>
            <person name="Kim S."/>
            <person name="Hendrick C."/>
            <person name="Zhao Z.-Y."/>
            <person name="Dolan M."/>
            <person name="Chumley F."/>
            <person name="Tingey S.V."/>
            <person name="Tomb J.-F."/>
            <person name="Gordon M.P."/>
            <person name="Olson M.V."/>
            <person name="Nester E.W."/>
        </authorList>
    </citation>
    <scope>NUCLEOTIDE SEQUENCE [LARGE SCALE GENOMIC DNA]</scope>
    <source>
        <strain>C58 / ATCC 33970</strain>
    </source>
</reference>
<reference key="2">
    <citation type="journal article" date="2001" name="Science">
        <title>Genome sequence of the plant pathogen and biotechnology agent Agrobacterium tumefaciens C58.</title>
        <authorList>
            <person name="Goodner B."/>
            <person name="Hinkle G."/>
            <person name="Gattung S."/>
            <person name="Miller N."/>
            <person name="Blanchard M."/>
            <person name="Qurollo B."/>
            <person name="Goldman B.S."/>
            <person name="Cao Y."/>
            <person name="Askenazi M."/>
            <person name="Halling C."/>
            <person name="Mullin L."/>
            <person name="Houmiel K."/>
            <person name="Gordon J."/>
            <person name="Vaudin M."/>
            <person name="Iartchouk O."/>
            <person name="Epp A."/>
            <person name="Liu F."/>
            <person name="Wollam C."/>
            <person name="Allinger M."/>
            <person name="Doughty D."/>
            <person name="Scott C."/>
            <person name="Lappas C."/>
            <person name="Markelz B."/>
            <person name="Flanagan C."/>
            <person name="Crowell C."/>
            <person name="Gurson J."/>
            <person name="Lomo C."/>
            <person name="Sear C."/>
            <person name="Strub G."/>
            <person name="Cielo C."/>
            <person name="Slater S."/>
        </authorList>
    </citation>
    <scope>NUCLEOTIDE SEQUENCE [LARGE SCALE GENOMIC DNA]</scope>
    <source>
        <strain>C58 / ATCC 33970</strain>
    </source>
</reference>
<accession>Q8UAM7</accession>
<accession>Q7CS81</accession>